<organism>
    <name type="scientific">Oryza sativa subsp. japonica</name>
    <name type="common">Rice</name>
    <dbReference type="NCBI Taxonomy" id="39947"/>
    <lineage>
        <taxon>Eukaryota</taxon>
        <taxon>Viridiplantae</taxon>
        <taxon>Streptophyta</taxon>
        <taxon>Embryophyta</taxon>
        <taxon>Tracheophyta</taxon>
        <taxon>Spermatophyta</taxon>
        <taxon>Magnoliopsida</taxon>
        <taxon>Liliopsida</taxon>
        <taxon>Poales</taxon>
        <taxon>Poaceae</taxon>
        <taxon>BOP clade</taxon>
        <taxon>Oryzoideae</taxon>
        <taxon>Oryzeae</taxon>
        <taxon>Oryzinae</taxon>
        <taxon>Oryza</taxon>
        <taxon>Oryza sativa</taxon>
    </lineage>
</organism>
<name>HMA2_ORYSJ</name>
<reference key="1">
    <citation type="journal article" date="2011" name="Plant Cell Environ.">
        <title>Cadmium retention in rice roots is influenced by cadmium availability, chelation and translocation.</title>
        <authorList>
            <person name="Nocito F.F."/>
            <person name="Lancilli C."/>
            <person name="Dendena B."/>
            <person name="Lucchini G."/>
            <person name="Sacchi G.A."/>
        </authorList>
    </citation>
    <scope>NUCLEOTIDE SEQUENCE [MRNA]</scope>
    <scope>FUNCTION</scope>
    <source>
        <strain>cv. Volano</strain>
        <tissue>Root</tissue>
    </source>
</reference>
<reference key="2">
    <citation type="journal article" date="2012" name="Plant Cell Physiol.">
        <title>Mutations in rice (Oryza sativa) heavy metal ATPase 2 (OsHMA2) restrict the translocation of zinc and cadmium.</title>
        <authorList>
            <person name="Satoh-Nagasawa N."/>
            <person name="Mori M."/>
            <person name="Nakazawa N."/>
            <person name="Kawamoto T."/>
            <person name="Nagato Y."/>
            <person name="Sakurai K."/>
            <person name="Takahashi H."/>
            <person name="Watanabe A."/>
            <person name="Akagi H."/>
        </authorList>
    </citation>
    <scope>NUCLEOTIDE SEQUENCE [MRNA]</scope>
    <scope>FUNCTION</scope>
    <scope>CATALYTIC ACTIVITY</scope>
    <scope>SUBCELLULAR LOCATION</scope>
    <scope>TISSUE SPECIFICITY</scope>
    <scope>DISRUPTION PHENOTYPE</scope>
    <source>
        <strain>cv. Nipponbare</strain>
    </source>
</reference>
<reference key="3">
    <citation type="journal article" date="2013" name="Plant Physiol.">
        <title>Preferential delivery of zinc to developing tissues in rice is mediated by P-type heavy metal ATPase OsHMA2.</title>
        <authorList>
            <person name="Yamaji N."/>
            <person name="Xia J."/>
            <person name="Mitani-Ueno N."/>
            <person name="Yokosho K."/>
            <person name="Feng Ma J."/>
        </authorList>
    </citation>
    <scope>NUCLEOTIDE SEQUENCE [MRNA]</scope>
    <scope>FUNCTION</scope>
    <scope>SUBCELLULAR LOCATION</scope>
    <scope>TISSUE SPECIFICITY</scope>
    <source>
        <strain>cv. Nipponbare</strain>
    </source>
</reference>
<reference key="4">
    <citation type="journal article" date="2005" name="Nature">
        <title>The map-based sequence of the rice genome.</title>
        <authorList>
            <consortium name="International rice genome sequencing project (IRGSP)"/>
        </authorList>
    </citation>
    <scope>NUCLEOTIDE SEQUENCE [LARGE SCALE GENOMIC DNA]</scope>
    <source>
        <strain>cv. Nipponbare</strain>
    </source>
</reference>
<reference key="5">
    <citation type="journal article" date="2008" name="Nucleic Acids Res.">
        <title>The rice annotation project database (RAP-DB): 2008 update.</title>
        <authorList>
            <consortium name="The rice annotation project (RAP)"/>
        </authorList>
    </citation>
    <scope>GENOME REANNOTATION</scope>
    <source>
        <strain>cv. Nipponbare</strain>
    </source>
</reference>
<reference key="6">
    <citation type="journal article" date="2013" name="Rice">
        <title>Improvement of the Oryza sativa Nipponbare reference genome using next generation sequence and optical map data.</title>
        <authorList>
            <person name="Kawahara Y."/>
            <person name="de la Bastide M."/>
            <person name="Hamilton J.P."/>
            <person name="Kanamori H."/>
            <person name="McCombie W.R."/>
            <person name="Ouyang S."/>
            <person name="Schwartz D.C."/>
            <person name="Tanaka T."/>
            <person name="Wu J."/>
            <person name="Zhou S."/>
            <person name="Childs K.L."/>
            <person name="Davidson R.M."/>
            <person name="Lin H."/>
            <person name="Quesada-Ocampo L."/>
            <person name="Vaillancourt B."/>
            <person name="Sakai H."/>
            <person name="Lee S.S."/>
            <person name="Kim J."/>
            <person name="Numa H."/>
            <person name="Itoh T."/>
            <person name="Buell C.R."/>
            <person name="Matsumoto T."/>
        </authorList>
    </citation>
    <scope>GENOME REANNOTATION</scope>
    <source>
        <strain>cv. Nipponbare</strain>
    </source>
</reference>
<reference key="7">
    <citation type="journal article" date="2005" name="PLoS Biol.">
        <title>The genomes of Oryza sativa: a history of duplications.</title>
        <authorList>
            <person name="Yu J."/>
            <person name="Wang J."/>
            <person name="Lin W."/>
            <person name="Li S."/>
            <person name="Li H."/>
            <person name="Zhou J."/>
            <person name="Ni P."/>
            <person name="Dong W."/>
            <person name="Hu S."/>
            <person name="Zeng C."/>
            <person name="Zhang J."/>
            <person name="Zhang Y."/>
            <person name="Li R."/>
            <person name="Xu Z."/>
            <person name="Li S."/>
            <person name="Li X."/>
            <person name="Zheng H."/>
            <person name="Cong L."/>
            <person name="Lin L."/>
            <person name="Yin J."/>
            <person name="Geng J."/>
            <person name="Li G."/>
            <person name="Shi J."/>
            <person name="Liu J."/>
            <person name="Lv H."/>
            <person name="Li J."/>
            <person name="Wang J."/>
            <person name="Deng Y."/>
            <person name="Ran L."/>
            <person name="Shi X."/>
            <person name="Wang X."/>
            <person name="Wu Q."/>
            <person name="Li C."/>
            <person name="Ren X."/>
            <person name="Wang J."/>
            <person name="Wang X."/>
            <person name="Li D."/>
            <person name="Liu D."/>
            <person name="Zhang X."/>
            <person name="Ji Z."/>
            <person name="Zhao W."/>
            <person name="Sun Y."/>
            <person name="Zhang Z."/>
            <person name="Bao J."/>
            <person name="Han Y."/>
            <person name="Dong L."/>
            <person name="Ji J."/>
            <person name="Chen P."/>
            <person name="Wu S."/>
            <person name="Liu J."/>
            <person name="Xiao Y."/>
            <person name="Bu D."/>
            <person name="Tan J."/>
            <person name="Yang L."/>
            <person name="Ye C."/>
            <person name="Zhang J."/>
            <person name="Xu J."/>
            <person name="Zhou Y."/>
            <person name="Yu Y."/>
            <person name="Zhang B."/>
            <person name="Zhuang S."/>
            <person name="Wei H."/>
            <person name="Liu B."/>
            <person name="Lei M."/>
            <person name="Yu H."/>
            <person name="Li Y."/>
            <person name="Xu H."/>
            <person name="Wei S."/>
            <person name="He X."/>
            <person name="Fang L."/>
            <person name="Zhang Z."/>
            <person name="Zhang Y."/>
            <person name="Huang X."/>
            <person name="Su Z."/>
            <person name="Tong W."/>
            <person name="Li J."/>
            <person name="Tong Z."/>
            <person name="Li S."/>
            <person name="Ye J."/>
            <person name="Wang L."/>
            <person name="Fang L."/>
            <person name="Lei T."/>
            <person name="Chen C.-S."/>
            <person name="Chen H.-C."/>
            <person name="Xu Z."/>
            <person name="Li H."/>
            <person name="Huang H."/>
            <person name="Zhang F."/>
            <person name="Xu H."/>
            <person name="Li N."/>
            <person name="Zhao C."/>
            <person name="Li S."/>
            <person name="Dong L."/>
            <person name="Huang Y."/>
            <person name="Li L."/>
            <person name="Xi Y."/>
            <person name="Qi Q."/>
            <person name="Li W."/>
            <person name="Zhang B."/>
            <person name="Hu W."/>
            <person name="Zhang Y."/>
            <person name="Tian X."/>
            <person name="Jiao Y."/>
            <person name="Liang X."/>
            <person name="Jin J."/>
            <person name="Gao L."/>
            <person name="Zheng W."/>
            <person name="Hao B."/>
            <person name="Liu S.-M."/>
            <person name="Wang W."/>
            <person name="Yuan L."/>
            <person name="Cao M."/>
            <person name="McDermott J."/>
            <person name="Samudrala R."/>
            <person name="Wang J."/>
            <person name="Wong G.K.-S."/>
            <person name="Yang H."/>
        </authorList>
    </citation>
    <scope>NUCLEOTIDE SEQUENCE [LARGE SCALE GENOMIC DNA]</scope>
    <source>
        <strain>cv. Nipponbare</strain>
    </source>
</reference>
<reference key="8">
    <citation type="journal article" date="2012" name="Plant Cell Environ.">
        <title>The OsHMA2 transporter is involved in root-to-shoot translocation of Zn and Cd in rice.</title>
        <authorList>
            <person name="Takahashi R."/>
            <person name="Ishimaru Y."/>
            <person name="Shimo H."/>
            <person name="Ogo Y."/>
            <person name="Senoura T."/>
            <person name="Nishizawa N.K."/>
            <person name="Nakanishi H."/>
        </authorList>
    </citation>
    <scope>FUNCTION</scope>
    <scope>SUBCELLULAR LOCATION</scope>
</reference>
<keyword id="KW-0067">ATP-binding</keyword>
<keyword id="KW-0104">Cadmium</keyword>
<keyword id="KW-1003">Cell membrane</keyword>
<keyword id="KW-0406">Ion transport</keyword>
<keyword id="KW-0472">Membrane</keyword>
<keyword id="KW-0479">Metal-binding</keyword>
<keyword id="KW-0547">Nucleotide-binding</keyword>
<keyword id="KW-1185">Reference proteome</keyword>
<keyword id="KW-1278">Translocase</keyword>
<keyword id="KW-0812">Transmembrane</keyword>
<keyword id="KW-1133">Transmembrane helix</keyword>
<keyword id="KW-0813">Transport</keyword>
<keyword id="KW-0862">Zinc</keyword>
<evidence type="ECO:0000255" key="1"/>
<evidence type="ECO:0000255" key="2">
    <source>
        <dbReference type="PROSITE-ProRule" id="PRU00280"/>
    </source>
</evidence>
<evidence type="ECO:0000256" key="3">
    <source>
        <dbReference type="SAM" id="MobiDB-lite"/>
    </source>
</evidence>
<evidence type="ECO:0000269" key="4">
    <source>
    </source>
</evidence>
<evidence type="ECO:0000269" key="5">
    <source>
    </source>
</evidence>
<evidence type="ECO:0000269" key="6">
    <source>
    </source>
</evidence>
<evidence type="ECO:0000269" key="7">
    <source>
    </source>
</evidence>
<evidence type="ECO:0000303" key="8">
    <source>
    </source>
</evidence>
<evidence type="ECO:0000305" key="9"/>
<evidence type="ECO:0000312" key="10">
    <source>
        <dbReference type="EMBL" id="BAS99337.1"/>
    </source>
</evidence>
<evidence type="ECO:0000312" key="11">
    <source>
        <dbReference type="EMBL" id="EAZ38178.1"/>
    </source>
</evidence>
<gene>
    <name evidence="8" type="primary">HMA2</name>
    <name evidence="10" type="ordered locus">Os06g0700700</name>
    <name evidence="9" type="ordered locus">LOC_Os06g48720</name>
    <name evidence="11" type="ORF">OsJ_22530</name>
</gene>
<accession>A3BF39</accession>
<accession>C7J449</accession>
<accession>E7EC32</accession>
<dbReference type="EC" id="7.2.2.12" evidence="5"/>
<dbReference type="EC" id="7.2.2.21" evidence="5"/>
<dbReference type="EMBL" id="HQ646362">
    <property type="protein sequence ID" value="ADU53143.1"/>
    <property type="molecule type" value="mRNA"/>
</dbReference>
<dbReference type="EMBL" id="AB661672">
    <property type="protein sequence ID" value="BAM36049.1"/>
    <property type="molecule type" value="mRNA"/>
</dbReference>
<dbReference type="EMBL" id="AB697186">
    <property type="protein sequence ID" value="BAN45659.1"/>
    <property type="molecule type" value="mRNA"/>
</dbReference>
<dbReference type="EMBL" id="AP005966">
    <property type="status" value="NOT_ANNOTATED_CDS"/>
    <property type="molecule type" value="Genomic_DNA"/>
</dbReference>
<dbReference type="EMBL" id="AP008212">
    <property type="protein sequence ID" value="BAH93709.1"/>
    <property type="status" value="ALT_SEQ"/>
    <property type="molecule type" value="Genomic_DNA"/>
</dbReference>
<dbReference type="EMBL" id="AP014962">
    <property type="protein sequence ID" value="BAS99337.1"/>
    <property type="molecule type" value="Genomic_DNA"/>
</dbReference>
<dbReference type="EMBL" id="CM000143">
    <property type="protein sequence ID" value="EAZ38178.1"/>
    <property type="molecule type" value="Genomic_DNA"/>
</dbReference>
<dbReference type="RefSeq" id="XP_015643659.1">
    <property type="nucleotide sequence ID" value="XM_015788173.1"/>
</dbReference>
<dbReference type="SMR" id="A3BF39"/>
<dbReference type="FunCoup" id="A3BF39">
    <property type="interactions" value="68"/>
</dbReference>
<dbReference type="STRING" id="39947.A3BF39"/>
<dbReference type="TCDB" id="3.A.3.6.19">
    <property type="family name" value="the p-type atpase (p-atpase) superfamily"/>
</dbReference>
<dbReference type="PaxDb" id="39947-A3BF39"/>
<dbReference type="EnsemblPlants" id="Os06t0700700-02">
    <property type="protein sequence ID" value="Os06t0700700-02"/>
    <property type="gene ID" value="Os06g0700700"/>
</dbReference>
<dbReference type="Gramene" id="Os06t0700700-02">
    <property type="protein sequence ID" value="Os06t0700700-02"/>
    <property type="gene ID" value="Os06g0700700"/>
</dbReference>
<dbReference type="KEGG" id="dosa:Os06g0700650"/>
<dbReference type="eggNOG" id="KOG0207">
    <property type="taxonomic scope" value="Eukaryota"/>
</dbReference>
<dbReference type="InParanoid" id="A3BF39"/>
<dbReference type="OrthoDB" id="432719at2759"/>
<dbReference type="BRENDA" id="7.2.2.12">
    <property type="organism ID" value="4460"/>
</dbReference>
<dbReference type="Proteomes" id="UP000000763">
    <property type="component" value="Chromosome 6"/>
</dbReference>
<dbReference type="Proteomes" id="UP000007752">
    <property type="component" value="Chromosome 6"/>
</dbReference>
<dbReference type="Proteomes" id="UP000059680">
    <property type="component" value="Chromosome 6"/>
</dbReference>
<dbReference type="ExpressionAtlas" id="A3BF39">
    <property type="expression patterns" value="baseline and differential"/>
</dbReference>
<dbReference type="GO" id="GO:0016020">
    <property type="term" value="C:membrane"/>
    <property type="evidence" value="ECO:0000318"/>
    <property type="project" value="GO_Central"/>
</dbReference>
<dbReference type="GO" id="GO:0005886">
    <property type="term" value="C:plasma membrane"/>
    <property type="evidence" value="ECO:0007669"/>
    <property type="project" value="UniProtKB-SubCell"/>
</dbReference>
<dbReference type="GO" id="GO:0005524">
    <property type="term" value="F:ATP binding"/>
    <property type="evidence" value="ECO:0007669"/>
    <property type="project" value="UniProtKB-KW"/>
</dbReference>
<dbReference type="GO" id="GO:0016887">
    <property type="term" value="F:ATP hydrolysis activity"/>
    <property type="evidence" value="ECO:0007669"/>
    <property type="project" value="InterPro"/>
</dbReference>
<dbReference type="GO" id="GO:0046872">
    <property type="term" value="F:metal ion binding"/>
    <property type="evidence" value="ECO:0007669"/>
    <property type="project" value="UniProtKB-KW"/>
</dbReference>
<dbReference type="GO" id="GO:0008551">
    <property type="term" value="F:P-type cadmium transporter activity"/>
    <property type="evidence" value="ECO:0007669"/>
    <property type="project" value="UniProtKB-EC"/>
</dbReference>
<dbReference type="GO" id="GO:0016463">
    <property type="term" value="F:P-type zinc transporter activity"/>
    <property type="evidence" value="ECO:0007669"/>
    <property type="project" value="UniProtKB-EC"/>
</dbReference>
<dbReference type="GO" id="GO:0022857">
    <property type="term" value="F:transmembrane transporter activity"/>
    <property type="evidence" value="ECO:0000318"/>
    <property type="project" value="GO_Central"/>
</dbReference>
<dbReference type="GO" id="GO:0055085">
    <property type="term" value="P:transmembrane transport"/>
    <property type="evidence" value="ECO:0000318"/>
    <property type="project" value="GO_Central"/>
</dbReference>
<dbReference type="CDD" id="cd00371">
    <property type="entry name" value="HMA"/>
    <property type="match status" value="1"/>
</dbReference>
<dbReference type="CDD" id="cd02079">
    <property type="entry name" value="P-type_ATPase_HM"/>
    <property type="match status" value="1"/>
</dbReference>
<dbReference type="FunFam" id="2.70.150.10:FF:000002">
    <property type="entry name" value="Copper-transporting ATPase 1, putative"/>
    <property type="match status" value="1"/>
</dbReference>
<dbReference type="FunFam" id="3.40.50.1000:FF:000020">
    <property type="entry name" value="Probable cation-transporting P-type ATPase"/>
    <property type="match status" value="1"/>
</dbReference>
<dbReference type="FunFam" id="3.30.70.100:FF:000022">
    <property type="entry name" value="Putative cadmium/zinc-transporting ATPase 3"/>
    <property type="match status" value="1"/>
</dbReference>
<dbReference type="FunFam" id="3.40.1110.10:FF:000043">
    <property type="entry name" value="Putative cadmium/zinc-transporting ATPase 3"/>
    <property type="match status" value="1"/>
</dbReference>
<dbReference type="Gene3D" id="3.30.70.100">
    <property type="match status" value="1"/>
</dbReference>
<dbReference type="Gene3D" id="3.40.1110.10">
    <property type="entry name" value="Calcium-transporting ATPase, cytoplasmic domain N"/>
    <property type="match status" value="1"/>
</dbReference>
<dbReference type="Gene3D" id="2.70.150.10">
    <property type="entry name" value="Calcium-transporting ATPase, cytoplasmic transduction domain A"/>
    <property type="match status" value="1"/>
</dbReference>
<dbReference type="Gene3D" id="3.40.50.1000">
    <property type="entry name" value="HAD superfamily/HAD-like"/>
    <property type="match status" value="1"/>
</dbReference>
<dbReference type="InterPro" id="IPR023299">
    <property type="entry name" value="ATPase_P-typ_cyto_dom_N"/>
</dbReference>
<dbReference type="InterPro" id="IPR018303">
    <property type="entry name" value="ATPase_P-typ_P_site"/>
</dbReference>
<dbReference type="InterPro" id="IPR023298">
    <property type="entry name" value="ATPase_P-typ_TM_dom_sf"/>
</dbReference>
<dbReference type="InterPro" id="IPR008250">
    <property type="entry name" value="ATPase_P-typ_transduc_dom_A_sf"/>
</dbReference>
<dbReference type="InterPro" id="IPR051014">
    <property type="entry name" value="Cation_Transport_ATPase_IB"/>
</dbReference>
<dbReference type="InterPro" id="IPR036412">
    <property type="entry name" value="HAD-like_sf"/>
</dbReference>
<dbReference type="InterPro" id="IPR023214">
    <property type="entry name" value="HAD_sf"/>
</dbReference>
<dbReference type="InterPro" id="IPR006121">
    <property type="entry name" value="HMA_dom"/>
</dbReference>
<dbReference type="InterPro" id="IPR036163">
    <property type="entry name" value="HMA_dom_sf"/>
</dbReference>
<dbReference type="InterPro" id="IPR027256">
    <property type="entry name" value="P-typ_ATPase_IB"/>
</dbReference>
<dbReference type="InterPro" id="IPR001757">
    <property type="entry name" value="P_typ_ATPase"/>
</dbReference>
<dbReference type="InterPro" id="IPR044492">
    <property type="entry name" value="P_typ_ATPase_HD_dom"/>
</dbReference>
<dbReference type="NCBIfam" id="TIGR01512">
    <property type="entry name" value="ATPase-IB2_Cd"/>
    <property type="match status" value="1"/>
</dbReference>
<dbReference type="NCBIfam" id="TIGR01525">
    <property type="entry name" value="ATPase-IB_hvy"/>
    <property type="match status" value="1"/>
</dbReference>
<dbReference type="NCBIfam" id="TIGR01494">
    <property type="entry name" value="ATPase_P-type"/>
    <property type="match status" value="1"/>
</dbReference>
<dbReference type="PANTHER" id="PTHR48085">
    <property type="entry name" value="CADMIUM/ZINC-TRANSPORTING ATPASE HMA2-RELATED"/>
    <property type="match status" value="1"/>
</dbReference>
<dbReference type="PANTHER" id="PTHR48085:SF5">
    <property type="entry name" value="CADMIUM_ZINC-TRANSPORTING ATPASE HMA4-RELATED"/>
    <property type="match status" value="1"/>
</dbReference>
<dbReference type="Pfam" id="PF00122">
    <property type="entry name" value="E1-E2_ATPase"/>
    <property type="match status" value="1"/>
</dbReference>
<dbReference type="Pfam" id="PF00702">
    <property type="entry name" value="Hydrolase"/>
    <property type="match status" value="1"/>
</dbReference>
<dbReference type="PRINTS" id="PR00119">
    <property type="entry name" value="CATATPASE"/>
</dbReference>
<dbReference type="PRINTS" id="PR00120">
    <property type="entry name" value="HATPASE"/>
</dbReference>
<dbReference type="SFLD" id="SFLDS00003">
    <property type="entry name" value="Haloacid_Dehalogenase"/>
    <property type="match status" value="1"/>
</dbReference>
<dbReference type="SFLD" id="SFLDF00027">
    <property type="entry name" value="p-type_atpase"/>
    <property type="match status" value="1"/>
</dbReference>
<dbReference type="SUPFAM" id="SSF81653">
    <property type="entry name" value="Calcium ATPase, transduction domain A"/>
    <property type="match status" value="1"/>
</dbReference>
<dbReference type="SUPFAM" id="SSF81665">
    <property type="entry name" value="Calcium ATPase, transmembrane domain M"/>
    <property type="match status" value="1"/>
</dbReference>
<dbReference type="SUPFAM" id="SSF56784">
    <property type="entry name" value="HAD-like"/>
    <property type="match status" value="1"/>
</dbReference>
<dbReference type="SUPFAM" id="SSF55008">
    <property type="entry name" value="HMA, heavy metal-associated domain"/>
    <property type="match status" value="1"/>
</dbReference>
<dbReference type="PROSITE" id="PS00154">
    <property type="entry name" value="ATPASE_E1_E2"/>
    <property type="match status" value="1"/>
</dbReference>
<dbReference type="PROSITE" id="PS50846">
    <property type="entry name" value="HMA_2"/>
    <property type="match status" value="1"/>
</dbReference>
<comment type="function">
    <text evidence="4 5 6 7">Zinc/cadmium transporter that plays an essential role in promoting translocation of zinc and cadmium from roots to shoots (PubMed:21388416, PubMed:22123790, PubMed:22548273, PubMed:23575418). May control cadmium loading into xylem (PubMed:21388416). In roots, transports zinc and cadmium from the apoplast to the symplast to facilitate translocation via the phloem. In nodes, functions to load zinc and cadmium to the phloem for the preferential distribution to the upper nodes and panicles (PubMed:23575418).</text>
</comment>
<comment type="catalytic activity">
    <reaction evidence="5">
        <text>Zn(2+)(in) + ATP + H2O = Zn(2+)(out) + ADP + phosphate + H(+)</text>
        <dbReference type="Rhea" id="RHEA:20621"/>
        <dbReference type="ChEBI" id="CHEBI:15377"/>
        <dbReference type="ChEBI" id="CHEBI:15378"/>
        <dbReference type="ChEBI" id="CHEBI:29105"/>
        <dbReference type="ChEBI" id="CHEBI:30616"/>
        <dbReference type="ChEBI" id="CHEBI:43474"/>
        <dbReference type="ChEBI" id="CHEBI:456216"/>
        <dbReference type="EC" id="7.2.2.12"/>
    </reaction>
</comment>
<comment type="catalytic activity">
    <reaction evidence="5">
        <text>Cd(2+)(in) + ATP + H2O = Cd(2+)(out) + ADP + phosphate + H(+)</text>
        <dbReference type="Rhea" id="RHEA:12132"/>
        <dbReference type="ChEBI" id="CHEBI:15377"/>
        <dbReference type="ChEBI" id="CHEBI:15378"/>
        <dbReference type="ChEBI" id="CHEBI:30616"/>
        <dbReference type="ChEBI" id="CHEBI:43474"/>
        <dbReference type="ChEBI" id="CHEBI:48775"/>
        <dbReference type="ChEBI" id="CHEBI:456216"/>
        <dbReference type="EC" id="7.2.2.21"/>
    </reaction>
</comment>
<comment type="subcellular location">
    <subcellularLocation>
        <location evidence="5 6 7">Cell membrane</location>
        <topology evidence="1">Multi-pass membrane protein</topology>
    </subcellularLocation>
</comment>
<comment type="tissue specificity">
    <text evidence="7">In roots, localizes at the pericycle cells. In nodes, localizes in the phloem parenchyma and companion cells of both enlarged and diffuse vascular bundles.</text>
</comment>
<comment type="disruption phenotype">
    <text evidence="5 7">Reduced plant height and biomass. Reduced grain yield. Decreased levels of zinc an cadmium in grain, rachis, husk and nodes.</text>
</comment>
<comment type="similarity">
    <text evidence="9">Belongs to the cation transport ATPase (P-type) (TC 3.A.3) family. Type IB subfamily.</text>
</comment>
<comment type="sequence caution" evidence="9">
    <conflict type="erroneous gene model prediction">
        <sequence resource="EMBL-CDS" id="BAH93709"/>
    </conflict>
</comment>
<protein>
    <recommendedName>
        <fullName evidence="9">Cadmium/zinc-transporting ATPase HMA2</fullName>
        <ecNumber evidence="5">7.2.2.12</ecNumber>
        <ecNumber evidence="5">7.2.2.21</ecNumber>
    </recommendedName>
    <alternativeName>
        <fullName evidence="9">Protein HEAVY METAL ATPASE 2</fullName>
        <shortName evidence="8">OsHMA2</shortName>
    </alternativeName>
</protein>
<sequence>MAAEGGRCQKSYFDVLGICCPSEVPLVEKLLQPLEGVQKVTVIVPSRTVIVVHDVDAISQSQIVKALNQARLEASVRAYGNGSEKITNKWPSPYVLLCGLLLVVSLFEHFWHPLKWFALVAAAAGLPPIVLRSIAAIRRLTLDVNILMLIAVAGAIALKDYSEAGFIVFLFTTAEWLETRASHKATAGMSALMSMAPQKAILAETGEVVAARDVKVNTVIAVKAGEVIPIDGVVVDGRSEVDESTLTGESFPVSKQPDSQVWAGTLNIDGYIAVRTTAMADNSAVAKMARLVEEAQNSRSSTQRLIDTCAKYYTPAVVVMAGSVAAIPAIAKAHNLKHWFQLALVLLVSACPCALVLSTPIATFCALLRAARTGLLIKGGDVLESLASIKVAAFDKTGTITRGEFSVEEFQPVGERVSLQQLLYWVSSVESRSSHPMASVLVDYAQSKSVEPKSENVSEFQIYPGEGIYGEIDGAGIYIGNKRILSRASCETVPDMKDMKGVTIGYVACNNELIGVFTLSDACRTGSAEAIKELRSLGIKSVMLTGDSSAAATYAQNQLGNILAEVHAELLPEDKVRIVGELKEKDGPTLMVGDGMNDAPALAKADVGVSMGVSGSAVAMETSHVALMSNDIRRIPKAVRLARRTHRTIIVNIIFSVITKLAIVGLAFAGHPLIWAAVLADVGTCLLVIMYSMLLLREKDSRKAKKCAASHHGSPKKCCSSSHHGSHAKKNHGVSHHCSDGPCKSMVSCKESSVAKNACHDHHHEHNHHEEPAHKHSSNQHGCHDHSHGHSNCKEPSNQLITNKHACHDGHNHCADTSNLHDTKKHDCHGHEHSTCKEELNALPPTNDHACHGHEHSHCEEPVALHSTGEHACHEHEHEHIHCDEPIGSHCADKHACHDHEQVHEHHCCDEQQTPHTADLHPCHDHDHDNLEVEEVKDCHAEPPHHHNHCCHEPHDQVKNDTHPVQEHSISIEESSDHHEHHHNEEHKAEDCGHHPKPKDCAPPPTDCISRNCCSNTSKGKDICSSLHRDHHTSQASRCCRSYVKCSRPSRSCCSHSIVKLPEIVVE</sequence>
<proteinExistence type="evidence at protein level"/>
<feature type="chain" id="PRO_0000440964" description="Cadmium/zinc-transporting ATPase HMA2">
    <location>
        <begin position="1"/>
        <end position="1067"/>
    </location>
</feature>
<feature type="transmembrane region" description="Helical" evidence="1">
    <location>
        <begin position="94"/>
        <end position="114"/>
    </location>
</feature>
<feature type="transmembrane region" description="Helical" evidence="1">
    <location>
        <begin position="117"/>
        <end position="137"/>
    </location>
</feature>
<feature type="transmembrane region" description="Helical" evidence="1">
    <location>
        <begin position="140"/>
        <end position="160"/>
    </location>
</feature>
<feature type="transmembrane region" description="Helical" evidence="1">
    <location>
        <begin position="162"/>
        <end position="182"/>
    </location>
</feature>
<feature type="transmembrane region" description="Helical" evidence="1">
    <location>
        <begin position="313"/>
        <end position="333"/>
    </location>
</feature>
<feature type="transmembrane region" description="Helical" evidence="1">
    <location>
        <begin position="342"/>
        <end position="362"/>
    </location>
</feature>
<feature type="transmembrane region" description="Helical" evidence="1">
    <location>
        <begin position="649"/>
        <end position="669"/>
    </location>
</feature>
<feature type="transmembrane region" description="Helical" evidence="1">
    <location>
        <begin position="673"/>
        <end position="693"/>
    </location>
</feature>
<feature type="domain" description="HMA" evidence="2">
    <location>
        <begin position="9"/>
        <end position="75"/>
    </location>
</feature>
<feature type="region of interest" description="Disordered" evidence="3">
    <location>
        <begin position="711"/>
        <end position="739"/>
    </location>
</feature>
<feature type="region of interest" description="Disordered" evidence="3">
    <location>
        <begin position="760"/>
        <end position="790"/>
    </location>
</feature>
<feature type="region of interest" description="Disordered" evidence="3">
    <location>
        <begin position="960"/>
        <end position="996"/>
    </location>
</feature>
<feature type="compositionally biased region" description="Basic residues" evidence="3">
    <location>
        <begin position="724"/>
        <end position="735"/>
    </location>
</feature>
<feature type="compositionally biased region" description="Basic and acidic residues" evidence="3">
    <location>
        <begin position="760"/>
        <end position="774"/>
    </location>
</feature>
<feature type="compositionally biased region" description="Basic and acidic residues" evidence="3">
    <location>
        <begin position="975"/>
        <end position="996"/>
    </location>
</feature>
<feature type="sequence conflict" description="In Ref. 1; ADU53143." evidence="9" ref="1">
    <original>A</original>
    <variation>T</variation>
    <location>
        <position position="70"/>
    </location>
</feature>